<organism>
    <name type="scientific">Populus trichocarpa</name>
    <name type="common">Western balsam poplar</name>
    <name type="synonym">Populus balsamifera subsp. trichocarpa</name>
    <dbReference type="NCBI Taxonomy" id="3694"/>
    <lineage>
        <taxon>Eukaryota</taxon>
        <taxon>Viridiplantae</taxon>
        <taxon>Streptophyta</taxon>
        <taxon>Embryophyta</taxon>
        <taxon>Tracheophyta</taxon>
        <taxon>Spermatophyta</taxon>
        <taxon>Magnoliopsida</taxon>
        <taxon>eudicotyledons</taxon>
        <taxon>Gunneridae</taxon>
        <taxon>Pentapetalae</taxon>
        <taxon>rosids</taxon>
        <taxon>fabids</taxon>
        <taxon>Malpighiales</taxon>
        <taxon>Salicaceae</taxon>
        <taxon>Saliceae</taxon>
        <taxon>Populus</taxon>
    </lineage>
</organism>
<accession>B9GXD6</accession>
<sequence length="224" mass="23927">MMMNGQKLAPAAEVAVQLPESKVAADNISGTMSGPLVGASGGGTTAAMRPFGRKAEVMHVLLRLLCIITSVAALSFMFTAQQSSTISIYGFMLPVQSKWSFSHSFEYLVGVSAAVAAHSLLQLLISMSRLLRKSPVIPSRSHAWLIFAGDQVFAYAMISAGAAASGVTNLNRTGIQHTALPNFCKPLQSFCDHVAVSIFFTFTSCFLLAASAVQEVIWLSRSKY</sequence>
<gene>
    <name type="ORF">POPTRDRAFT_553757</name>
</gene>
<comment type="subunit">
    <text evidence="1">Homodimer and heterodimers.</text>
</comment>
<comment type="subcellular location">
    <subcellularLocation>
        <location evidence="1">Cell membrane</location>
        <topology evidence="1">Multi-pass membrane protein</topology>
    </subcellularLocation>
</comment>
<comment type="similarity">
    <text evidence="3">Belongs to the Casparian strip membrane proteins (CASP) family.</text>
</comment>
<protein>
    <recommendedName>
        <fullName>CASP-like protein 3A1</fullName>
        <shortName>PtCASPL3A1</shortName>
    </recommendedName>
</protein>
<reference key="1">
    <citation type="journal article" date="2006" name="Science">
        <title>The genome of black cottonwood, Populus trichocarpa (Torr. &amp; Gray).</title>
        <authorList>
            <person name="Tuskan G.A."/>
            <person name="Difazio S."/>
            <person name="Jansson S."/>
            <person name="Bohlmann J."/>
            <person name="Grigoriev I."/>
            <person name="Hellsten U."/>
            <person name="Putnam N."/>
            <person name="Ralph S."/>
            <person name="Rombauts S."/>
            <person name="Salamov A."/>
            <person name="Schein J."/>
            <person name="Sterck L."/>
            <person name="Aerts A."/>
            <person name="Bhalerao R.R."/>
            <person name="Bhalerao R.P."/>
            <person name="Blaudez D."/>
            <person name="Boerjan W."/>
            <person name="Brun A."/>
            <person name="Brunner A."/>
            <person name="Busov V."/>
            <person name="Campbell M."/>
            <person name="Carlson J."/>
            <person name="Chalot M."/>
            <person name="Chapman J."/>
            <person name="Chen G.-L."/>
            <person name="Cooper D."/>
            <person name="Coutinho P.M."/>
            <person name="Couturier J."/>
            <person name="Covert S."/>
            <person name="Cronk Q."/>
            <person name="Cunningham R."/>
            <person name="Davis J."/>
            <person name="Degroeve S."/>
            <person name="Dejardin A."/>
            <person name="dePamphilis C.W."/>
            <person name="Detter J."/>
            <person name="Dirks B."/>
            <person name="Dubchak I."/>
            <person name="Duplessis S."/>
            <person name="Ehlting J."/>
            <person name="Ellis B."/>
            <person name="Gendler K."/>
            <person name="Goodstein D."/>
            <person name="Gribskov M."/>
            <person name="Grimwood J."/>
            <person name="Groover A."/>
            <person name="Gunter L."/>
            <person name="Hamberger B."/>
            <person name="Heinze B."/>
            <person name="Helariutta Y."/>
            <person name="Henrissat B."/>
            <person name="Holligan D."/>
            <person name="Holt R."/>
            <person name="Huang W."/>
            <person name="Islam-Faridi N."/>
            <person name="Jones S."/>
            <person name="Jones-Rhoades M."/>
            <person name="Jorgensen R."/>
            <person name="Joshi C."/>
            <person name="Kangasjaervi J."/>
            <person name="Karlsson J."/>
            <person name="Kelleher C."/>
            <person name="Kirkpatrick R."/>
            <person name="Kirst M."/>
            <person name="Kohler A."/>
            <person name="Kalluri U."/>
            <person name="Larimer F."/>
            <person name="Leebens-Mack J."/>
            <person name="Leple J.-C."/>
            <person name="Locascio P."/>
            <person name="Lou Y."/>
            <person name="Lucas S."/>
            <person name="Martin F."/>
            <person name="Montanini B."/>
            <person name="Napoli C."/>
            <person name="Nelson D.R."/>
            <person name="Nelson C."/>
            <person name="Nieminen K."/>
            <person name="Nilsson O."/>
            <person name="Pereda V."/>
            <person name="Peter G."/>
            <person name="Philippe R."/>
            <person name="Pilate G."/>
            <person name="Poliakov A."/>
            <person name="Razumovskaya J."/>
            <person name="Richardson P."/>
            <person name="Rinaldi C."/>
            <person name="Ritland K."/>
            <person name="Rouze P."/>
            <person name="Ryaboy D."/>
            <person name="Schmutz J."/>
            <person name="Schrader J."/>
            <person name="Segerman B."/>
            <person name="Shin H."/>
            <person name="Siddiqui A."/>
            <person name="Sterky F."/>
            <person name="Terry A."/>
            <person name="Tsai C.-J."/>
            <person name="Uberbacher E."/>
            <person name="Unneberg P."/>
            <person name="Vahala J."/>
            <person name="Wall K."/>
            <person name="Wessler S."/>
            <person name="Yang G."/>
            <person name="Yin T."/>
            <person name="Douglas C."/>
            <person name="Marra M."/>
            <person name="Sandberg G."/>
            <person name="Van de Peer Y."/>
            <person name="Rokhsar D.S."/>
        </authorList>
    </citation>
    <scope>NUCLEOTIDE SEQUENCE [LARGE SCALE GENOMIC DNA]</scope>
    <source>
        <strain>cv. Nisqually</strain>
    </source>
</reference>
<reference key="2">
    <citation type="submission" date="2008-12" db="EMBL/GenBank/DDBJ databases">
        <authorList>
            <consortium name="US DOE Joint Genome Institute (JGI-PGF)"/>
            <person name="Grigoriev I.V."/>
            <person name="Terry A."/>
            <person name="Salamov A.A."/>
            <person name="Otillar R."/>
            <person name="Lou Y."/>
            <person name="Lucas S."/>
            <person name="Hammon N."/>
            <person name="Glavina del Rio T."/>
            <person name="Detter J."/>
            <person name="Kalin E."/>
            <person name="Tice H."/>
            <person name="Pitluck S."/>
            <person name="Chapman J."/>
            <person name="Putnam N.H."/>
            <person name="Brunner A."/>
            <person name="Busov V."/>
            <person name="Campbell M."/>
            <person name="Chalot M."/>
            <person name="Covert S."/>
            <person name="Davis J."/>
            <person name="DiFazio S."/>
            <person name="Gribskov M."/>
            <person name="Gunter L."/>
            <person name="Hamberger B."/>
            <person name="Jansson S."/>
            <person name="Joshi C."/>
            <person name="Larimer F."/>
            <person name="Martin F."/>
            <person name="Napoli C."/>
            <person name="Nelson D."/>
            <person name="Ralph S."/>
            <person name="Rombauts S."/>
            <person name="Rouze P."/>
            <person name="Schrader J."/>
            <person name="Tsai C."/>
            <person name="Vahala J."/>
            <person name="Tuskan G."/>
            <person name="Rokhsar D."/>
        </authorList>
    </citation>
    <scope>GENOME REANNOTATION</scope>
    <source>
        <strain>cv. Nisqually</strain>
    </source>
</reference>
<reference key="3">
    <citation type="journal article" date="2014" name="Plant Physiol.">
        <title>Functional and evolutionary analysis of the CASPARIAN STRIP MEMBRANE DOMAIN PROTEIN family.</title>
        <authorList>
            <person name="Roppolo D."/>
            <person name="Boeckmann B."/>
            <person name="Pfister A."/>
            <person name="Boutet E."/>
            <person name="Rubio M.C."/>
            <person name="Denervaud-Tendon V."/>
            <person name="Vermeer J.E."/>
            <person name="Gheyselinck J."/>
            <person name="Xenarios I."/>
            <person name="Geldner N."/>
        </authorList>
    </citation>
    <scope>GENE FAMILY</scope>
    <scope>NOMENCLATURE</scope>
</reference>
<dbReference type="EMBL" id="CM009292">
    <property type="protein sequence ID" value="EEE79194.2"/>
    <property type="molecule type" value="Genomic_DNA"/>
</dbReference>
<dbReference type="SMR" id="B9GXD6"/>
<dbReference type="STRING" id="3694.B9GXD6"/>
<dbReference type="EnsemblPlants" id="Potri.003G050400.1.v4.1">
    <property type="protein sequence ID" value="Potri.003G050400.1.v4.1"/>
    <property type="gene ID" value="Potri.003G050400.v4.1"/>
</dbReference>
<dbReference type="Gramene" id="Potri.003G050400.1.v4.1">
    <property type="protein sequence ID" value="Potri.003G050400.1.v4.1"/>
    <property type="gene ID" value="Potri.003G050400.v4.1"/>
</dbReference>
<dbReference type="KEGG" id="pop:7478414"/>
<dbReference type="eggNOG" id="ENOG502RN9B">
    <property type="taxonomic scope" value="Eukaryota"/>
</dbReference>
<dbReference type="HOGENOM" id="CLU_114729_1_0_1"/>
<dbReference type="InParanoid" id="B9GXD6"/>
<dbReference type="OMA" id="CKPLHKF"/>
<dbReference type="OrthoDB" id="1918787at2759"/>
<dbReference type="Proteomes" id="UP000006729">
    <property type="component" value="Chromosome 3"/>
</dbReference>
<dbReference type="ExpressionAtlas" id="B9GXD6">
    <property type="expression patterns" value="baseline"/>
</dbReference>
<dbReference type="GO" id="GO:0005886">
    <property type="term" value="C:plasma membrane"/>
    <property type="evidence" value="ECO:0007669"/>
    <property type="project" value="UniProtKB-SubCell"/>
</dbReference>
<dbReference type="InterPro" id="IPR006459">
    <property type="entry name" value="CASP/CASPL"/>
</dbReference>
<dbReference type="InterPro" id="IPR006702">
    <property type="entry name" value="CASP_dom"/>
</dbReference>
<dbReference type="NCBIfam" id="TIGR01569">
    <property type="entry name" value="A_tha_TIGR01569"/>
    <property type="match status" value="1"/>
</dbReference>
<dbReference type="PANTHER" id="PTHR33573:SF48">
    <property type="entry name" value="CASP-LIKE PROTEIN 3A1"/>
    <property type="match status" value="1"/>
</dbReference>
<dbReference type="PANTHER" id="PTHR33573">
    <property type="entry name" value="CASP-LIKE PROTEIN 4A4"/>
    <property type="match status" value="1"/>
</dbReference>
<dbReference type="Pfam" id="PF04535">
    <property type="entry name" value="CASP_dom"/>
    <property type="match status" value="1"/>
</dbReference>
<evidence type="ECO:0000250" key="1"/>
<evidence type="ECO:0000255" key="2"/>
<evidence type="ECO:0000305" key="3"/>
<proteinExistence type="inferred from homology"/>
<feature type="chain" id="PRO_0000391569" description="CASP-like protein 3A1">
    <location>
        <begin position="1"/>
        <end position="224"/>
    </location>
</feature>
<feature type="topological domain" description="Cytoplasmic" evidence="2">
    <location>
        <begin position="1"/>
        <end position="59"/>
    </location>
</feature>
<feature type="transmembrane region" description="Helical" evidence="2">
    <location>
        <begin position="60"/>
        <end position="80"/>
    </location>
</feature>
<feature type="topological domain" description="Extracellular" evidence="2">
    <location>
        <begin position="81"/>
        <end position="106"/>
    </location>
</feature>
<feature type="transmembrane region" description="Helical" evidence="2">
    <location>
        <begin position="107"/>
        <end position="127"/>
    </location>
</feature>
<feature type="topological domain" description="Cytoplasmic" evidence="2">
    <location>
        <begin position="128"/>
        <end position="142"/>
    </location>
</feature>
<feature type="transmembrane region" description="Helical" evidence="2">
    <location>
        <begin position="143"/>
        <end position="163"/>
    </location>
</feature>
<feature type="topological domain" description="Extracellular" evidence="2">
    <location>
        <begin position="164"/>
        <end position="192"/>
    </location>
</feature>
<feature type="transmembrane region" description="Helical" evidence="2">
    <location>
        <begin position="193"/>
        <end position="213"/>
    </location>
</feature>
<feature type="topological domain" description="Cytoplasmic" evidence="2">
    <location>
        <begin position="214"/>
        <end position="224"/>
    </location>
</feature>
<feature type="glycosylation site" description="N-linked (GlcNAc...) asparagine" evidence="2">
    <location>
        <position position="171"/>
    </location>
</feature>
<keyword id="KW-1003">Cell membrane</keyword>
<keyword id="KW-0325">Glycoprotein</keyword>
<keyword id="KW-0472">Membrane</keyword>
<keyword id="KW-1185">Reference proteome</keyword>
<keyword id="KW-0812">Transmembrane</keyword>
<keyword id="KW-1133">Transmembrane helix</keyword>
<name>CSPLO_POPTR</name>